<keyword id="KW-0186">Copper</keyword>
<keyword id="KW-0963">Cytoplasm</keyword>
<keyword id="KW-0479">Metal-binding</keyword>
<reference key="1">
    <citation type="submission" date="2007-02" db="EMBL/GenBank/DDBJ databases">
        <title>Complete sequence of chromosome of Yersinia pestis Pestoides F.</title>
        <authorList>
            <consortium name="US DOE Joint Genome Institute"/>
            <person name="Copeland A."/>
            <person name="Lucas S."/>
            <person name="Lapidus A."/>
            <person name="Barry K."/>
            <person name="Detter J.C."/>
            <person name="Glavina del Rio T."/>
            <person name="Hammon N."/>
            <person name="Israni S."/>
            <person name="Dalin E."/>
            <person name="Tice H."/>
            <person name="Pitluck S."/>
            <person name="Di Bartolo G."/>
            <person name="Chain P."/>
            <person name="Malfatti S."/>
            <person name="Shin M."/>
            <person name="Vergez L."/>
            <person name="Schmutz J."/>
            <person name="Larimer F."/>
            <person name="Land M."/>
            <person name="Hauser L."/>
            <person name="Worsham P."/>
            <person name="Chu M."/>
            <person name="Bearden S."/>
            <person name="Garcia E."/>
            <person name="Richardson P."/>
        </authorList>
    </citation>
    <scope>NUCLEOTIDE SEQUENCE [LARGE SCALE GENOMIC DNA]</scope>
    <source>
        <strain>Pestoides F</strain>
    </source>
</reference>
<evidence type="ECO:0000255" key="1">
    <source>
        <dbReference type="HAMAP-Rule" id="MF_01160"/>
    </source>
</evidence>
<comment type="function">
    <text evidence="1">Involved in resistance toward heavy metals.</text>
</comment>
<comment type="cofactor">
    <cofactor evidence="1">
        <name>Cu cation</name>
        <dbReference type="ChEBI" id="CHEBI:23378"/>
    </cofactor>
    <text evidence="1">Binds 1 copper ion per subunit.</text>
</comment>
<comment type="subunit">
    <text evidence="1">Homotrimer.</text>
</comment>
<comment type="subcellular location">
    <subcellularLocation>
        <location evidence="1">Cytoplasm</location>
    </subcellularLocation>
</comment>
<comment type="similarity">
    <text evidence="1">Belongs to the CutA family.</text>
</comment>
<proteinExistence type="inferred from homology"/>
<feature type="chain" id="PRO_1000065600" description="Divalent-cation tolerance protein CutA">
    <location>
        <begin position="1"/>
        <end position="119"/>
    </location>
</feature>
<feature type="binding site" evidence="1">
    <location>
        <position position="23"/>
    </location>
    <ligand>
        <name>Cu cation</name>
        <dbReference type="ChEBI" id="CHEBI:23378"/>
    </ligand>
</feature>
<feature type="binding site" evidence="1">
    <location>
        <position position="90"/>
    </location>
    <ligand>
        <name>Cu cation</name>
        <dbReference type="ChEBI" id="CHEBI:23378"/>
    </ligand>
</feature>
<feature type="binding site" evidence="1">
    <location>
        <position position="91"/>
    </location>
    <ligand>
        <name>Cu cation</name>
        <dbReference type="ChEBI" id="CHEBI:23378"/>
    </ligand>
</feature>
<accession>A4TRR5</accession>
<name>CUTA_YERPP</name>
<dbReference type="EMBL" id="CP000668">
    <property type="protein sequence ID" value="ABP41977.1"/>
    <property type="molecule type" value="Genomic_DNA"/>
</dbReference>
<dbReference type="RefSeq" id="WP_002209122.1">
    <property type="nucleotide sequence ID" value="NZ_CP009715.1"/>
</dbReference>
<dbReference type="SMR" id="A4TRR5"/>
<dbReference type="GeneID" id="57974262"/>
<dbReference type="KEGG" id="ypp:YPDSF_3627"/>
<dbReference type="GO" id="GO:0005737">
    <property type="term" value="C:cytoplasm"/>
    <property type="evidence" value="ECO:0007669"/>
    <property type="project" value="UniProtKB-SubCell"/>
</dbReference>
<dbReference type="GO" id="GO:0005507">
    <property type="term" value="F:copper ion binding"/>
    <property type="evidence" value="ECO:0007669"/>
    <property type="project" value="UniProtKB-UniRule"/>
</dbReference>
<dbReference type="GO" id="GO:0010038">
    <property type="term" value="P:response to metal ion"/>
    <property type="evidence" value="ECO:0007669"/>
    <property type="project" value="InterPro"/>
</dbReference>
<dbReference type="FunFam" id="3.30.70.120:FF:000004">
    <property type="entry name" value="Divalent-cation tolerance protein CutA"/>
    <property type="match status" value="1"/>
</dbReference>
<dbReference type="Gene3D" id="3.30.70.120">
    <property type="match status" value="1"/>
</dbReference>
<dbReference type="HAMAP" id="MF_01160">
    <property type="entry name" value="CutA"/>
    <property type="match status" value="1"/>
</dbReference>
<dbReference type="InterPro" id="IPR023700">
    <property type="entry name" value="CutA_Enterobact"/>
</dbReference>
<dbReference type="InterPro" id="IPR004323">
    <property type="entry name" value="Ion_tolerance_CutA"/>
</dbReference>
<dbReference type="InterPro" id="IPR011322">
    <property type="entry name" value="N-reg_PII-like_a/b"/>
</dbReference>
<dbReference type="InterPro" id="IPR015867">
    <property type="entry name" value="N-reg_PII/ATP_PRibTrfase_C"/>
</dbReference>
<dbReference type="NCBIfam" id="NF007930">
    <property type="entry name" value="PRK10645.1"/>
    <property type="match status" value="1"/>
</dbReference>
<dbReference type="PANTHER" id="PTHR23419">
    <property type="entry name" value="DIVALENT CATION TOLERANCE CUTA-RELATED"/>
    <property type="match status" value="1"/>
</dbReference>
<dbReference type="PANTHER" id="PTHR23419:SF8">
    <property type="entry name" value="FI09726P"/>
    <property type="match status" value="1"/>
</dbReference>
<dbReference type="Pfam" id="PF03091">
    <property type="entry name" value="CutA1"/>
    <property type="match status" value="1"/>
</dbReference>
<dbReference type="SUPFAM" id="SSF54913">
    <property type="entry name" value="GlnB-like"/>
    <property type="match status" value="1"/>
</dbReference>
<sequence>MSDSDAMTDPNAVSYSNAIVVLCTAPDEASAQNLAAQVLGEKLAACVTLLPGATSLYYWEGKLEQEYEVQLLFKSNTDHQQALLTYIKQHHPYQTPELLVLPVRDGDKDYLSWLNASLL</sequence>
<protein>
    <recommendedName>
        <fullName evidence="1">Divalent-cation tolerance protein CutA</fullName>
    </recommendedName>
</protein>
<gene>
    <name evidence="1" type="primary">cutA</name>
    <name type="ordered locus">YPDSF_3627</name>
</gene>
<organism>
    <name type="scientific">Yersinia pestis (strain Pestoides F)</name>
    <dbReference type="NCBI Taxonomy" id="386656"/>
    <lineage>
        <taxon>Bacteria</taxon>
        <taxon>Pseudomonadati</taxon>
        <taxon>Pseudomonadota</taxon>
        <taxon>Gammaproteobacteria</taxon>
        <taxon>Enterobacterales</taxon>
        <taxon>Yersiniaceae</taxon>
        <taxon>Yersinia</taxon>
    </lineage>
</organism>